<name>PFLAC_MYCS5</name>
<accession>Q4A724</accession>
<proteinExistence type="evidence at protein level"/>
<comment type="function">
    <text evidence="2">Catalyzes the hydrolysis of D-xylono-1,4-lactone-5-phosphate and L-arabino-1,4-lactone-5-phosphate. Also able to hydrolyze carboxy 1,4-lactones.</text>
</comment>
<comment type="catalytic activity">
    <reaction evidence="2">
        <text>a 1,4-lactone + H2O = a 4-hydroxyacid + H(+)</text>
        <dbReference type="Rhea" id="RHEA:12745"/>
        <dbReference type="ChEBI" id="CHEBI:15377"/>
        <dbReference type="ChEBI" id="CHEBI:15378"/>
        <dbReference type="ChEBI" id="CHEBI:37581"/>
        <dbReference type="ChEBI" id="CHEBI:136596"/>
        <dbReference type="EC" id="3.1.1.25"/>
    </reaction>
</comment>
<comment type="catalytic activity">
    <reaction evidence="2">
        <text>D-xylono-1,4-lactone 5-phosphate + H2O = 5-phospho-D-xylonate + H(+)</text>
        <dbReference type="Rhea" id="RHEA:52644"/>
        <dbReference type="ChEBI" id="CHEBI:15377"/>
        <dbReference type="ChEBI" id="CHEBI:15378"/>
        <dbReference type="ChEBI" id="CHEBI:136749"/>
        <dbReference type="ChEBI" id="CHEBI:136751"/>
        <dbReference type="EC" id="3.1.1.104"/>
    </reaction>
</comment>
<comment type="catalytic activity">
    <reaction evidence="2">
        <text>L-arabino-1,4-lactone 5-phosphate + H2O = 5-phospho-L-arabinonate + H(+)</text>
        <dbReference type="Rhea" id="RHEA:52648"/>
        <dbReference type="ChEBI" id="CHEBI:15377"/>
        <dbReference type="ChEBI" id="CHEBI:15378"/>
        <dbReference type="ChEBI" id="CHEBI:136753"/>
        <dbReference type="ChEBI" id="CHEBI:136756"/>
        <dbReference type="EC" id="3.1.1.104"/>
    </reaction>
</comment>
<comment type="cofactor">
    <cofactor evidence="2">
        <name>Zn(2+)</name>
        <dbReference type="ChEBI" id="CHEBI:29105"/>
    </cofactor>
    <text evidence="2">Binds 2 Zn(2+) ions per subunit.</text>
</comment>
<comment type="biophysicochemical properties">
    <kinetics>
        <KM evidence="2">0.5 mM for D-xylono-1,4-lactone-5-phosphate</KM>
        <KM evidence="2">0.3 mM for L-arabino-1,4-lactone-5-phosphate</KM>
        <text evidence="2">kcat is 23.4 sec(-1) with D-xylono-1,4-lactone-5-phosphate as substrate. kcat is 6.7 sec(-1) with L-arabino-1,4-lactone-5-phosphate as substrate.</text>
    </kinetics>
</comment>
<comment type="similarity">
    <text evidence="1">Belongs to the metallo-dependent hydrolases superfamily. Phosphotriesterase family.</text>
</comment>
<keyword id="KW-0002">3D-structure</keyword>
<keyword id="KW-0378">Hydrolase</keyword>
<keyword id="KW-0479">Metal-binding</keyword>
<keyword id="KW-1185">Reference proteome</keyword>
<keyword id="KW-0862">Zinc</keyword>
<protein>
    <recommendedName>
        <fullName evidence="3">Phospho-furanose lactonase</fullName>
        <ecNumber evidence="2">3.1.1.104</ecNumber>
        <ecNumber evidence="2">3.1.1.25</ecNumber>
    </recommendedName>
</protein>
<feature type="chain" id="PRO_0000439668" description="Phospho-furanose lactonase">
    <location>
        <begin position="1"/>
        <end position="353"/>
    </location>
</feature>
<feature type="binding site" evidence="2 7">
    <location>
        <position position="24"/>
    </location>
    <ligand>
        <name>Zn(2+)</name>
        <dbReference type="ChEBI" id="CHEBI:29105"/>
        <label>1</label>
    </ligand>
</feature>
<feature type="binding site" evidence="2 7">
    <location>
        <position position="26"/>
    </location>
    <ligand>
        <name>Zn(2+)</name>
        <dbReference type="ChEBI" id="CHEBI:29105"/>
        <label>1</label>
    </ligand>
</feature>
<feature type="binding site" description="via carbamate group" evidence="2 7">
    <location>
        <position position="153"/>
    </location>
    <ligand>
        <name>Zn(2+)</name>
        <dbReference type="ChEBI" id="CHEBI:29105"/>
        <label>1</label>
    </ligand>
</feature>
<feature type="binding site" description="via carbamate group" evidence="2 7">
    <location>
        <position position="153"/>
    </location>
    <ligand>
        <name>Zn(2+)</name>
        <dbReference type="ChEBI" id="CHEBI:29105"/>
        <label>2</label>
    </ligand>
</feature>
<feature type="binding site" evidence="2 7">
    <location>
        <position position="186"/>
    </location>
    <ligand>
        <name>Zn(2+)</name>
        <dbReference type="ChEBI" id="CHEBI:29105"/>
        <label>2</label>
    </ligand>
</feature>
<feature type="binding site" evidence="2 7">
    <location>
        <position position="214"/>
    </location>
    <ligand>
        <name>Zn(2+)</name>
        <dbReference type="ChEBI" id="CHEBI:29105"/>
        <label>2</label>
    </ligand>
</feature>
<feature type="binding site" evidence="2 6 7">
    <location>
        <begin position="244"/>
        <end position="245"/>
    </location>
    <ligand>
        <name>substrate</name>
    </ligand>
</feature>
<feature type="binding site" evidence="2 7">
    <location>
        <position position="272"/>
    </location>
    <ligand>
        <name>Zn(2+)</name>
        <dbReference type="ChEBI" id="CHEBI:29105"/>
        <label>1</label>
    </ligand>
</feature>
<feature type="binding site" evidence="2 6 7">
    <location>
        <begin position="275"/>
        <end position="278"/>
    </location>
    <ligand>
        <name>substrate</name>
    </ligand>
</feature>
<feature type="modified residue" description="N6-carboxylysine" evidence="2 7">
    <location>
        <position position="153"/>
    </location>
</feature>
<feature type="mutagenesis site" description="3- and 20-fold decrease of the affinity and catalytic efficiency for D-xylono-1,4-lactone-5-phosphate, respectively. 2- and 15-fold decrease of the affinity and catalytic efficiency for L-arabino-1,4-lactone-5-phosphate, respectively." evidence="2">
    <original>K</original>
    <variation>A</variation>
    <location>
        <position position="29"/>
    </location>
</feature>
<feature type="mutagenesis site" description="20-fold decrease of the catalytic efficiency for D-xylono-1,4-lactone-5-phosphate, but almost the same affinity compared to the wild-type. 6- and 11-fold decrease of the affinity and catalytic efficiency for L-arabino-1,4-lactone-5-phosphate, respectively." evidence="2">
    <original>E</original>
    <variation>Q</variation>
    <location>
        <position position="34"/>
    </location>
</feature>
<feature type="mutagenesis site" description="4- and 5-fold decrease of the catalytic efficiency and affinity for D-xylono-1,4-lactone-5-phosphate, respectively. Same catalytic efficiency for L-arabino-1,4-lactone-5-phosphate compared to the wild-type, but 2-fold decrease of the affinity." evidence="2">
    <original>H</original>
    <variation>N</variation>
    <location>
        <position position="100"/>
    </location>
</feature>
<feature type="strand" evidence="8">
    <location>
        <begin position="5"/>
        <end position="8"/>
    </location>
</feature>
<feature type="strand" evidence="8">
    <location>
        <begin position="11"/>
        <end position="14"/>
    </location>
</feature>
<feature type="helix" evidence="8">
    <location>
        <begin position="15"/>
        <end position="17"/>
    </location>
</feature>
<feature type="strand" evidence="8">
    <location>
        <begin position="20"/>
        <end position="25"/>
    </location>
</feature>
<feature type="helix" evidence="8">
    <location>
        <begin position="33"/>
        <end position="37"/>
    </location>
</feature>
<feature type="helix" evidence="8">
    <location>
        <begin position="39"/>
        <end position="41"/>
    </location>
</feature>
<feature type="helix" evidence="8">
    <location>
        <begin position="46"/>
        <end position="58"/>
    </location>
</feature>
<feature type="strand" evidence="8">
    <location>
        <begin position="61"/>
        <end position="66"/>
    </location>
</feature>
<feature type="turn" evidence="8">
    <location>
        <begin position="70"/>
        <end position="73"/>
    </location>
</feature>
<feature type="helix" evidence="8">
    <location>
        <begin position="76"/>
        <end position="86"/>
    </location>
</feature>
<feature type="helix" evidence="8">
    <location>
        <begin position="87"/>
        <end position="89"/>
    </location>
</feature>
<feature type="strand" evidence="8">
    <location>
        <begin position="92"/>
        <end position="98"/>
    </location>
</feature>
<feature type="helix" evidence="8">
    <location>
        <begin position="102"/>
        <end position="104"/>
    </location>
</feature>
<feature type="turn" evidence="8">
    <location>
        <begin position="107"/>
        <end position="109"/>
    </location>
</feature>
<feature type="helix" evidence="8">
    <location>
        <begin position="111"/>
        <end position="114"/>
    </location>
</feature>
<feature type="helix" evidence="8">
    <location>
        <begin position="117"/>
        <end position="129"/>
    </location>
</feature>
<feature type="turn" evidence="8">
    <location>
        <begin position="134"/>
        <end position="137"/>
    </location>
</feature>
<feature type="strand" evidence="8">
    <location>
        <begin position="138"/>
        <end position="140"/>
    </location>
</feature>
<feature type="strand" evidence="8">
    <location>
        <begin position="151"/>
        <end position="158"/>
    </location>
</feature>
<feature type="strand" evidence="8">
    <location>
        <begin position="160"/>
        <end position="162"/>
    </location>
</feature>
<feature type="helix" evidence="8">
    <location>
        <begin position="163"/>
        <end position="179"/>
    </location>
</feature>
<feature type="strand" evidence="8">
    <location>
        <begin position="183"/>
        <end position="188"/>
    </location>
</feature>
<feature type="helix" evidence="8">
    <location>
        <begin position="193"/>
        <end position="203"/>
    </location>
</feature>
<feature type="helix" evidence="8">
    <location>
        <begin position="207"/>
        <end position="209"/>
    </location>
</feature>
<feature type="strand" evidence="8">
    <location>
        <begin position="210"/>
        <end position="213"/>
    </location>
</feature>
<feature type="helix" evidence="8">
    <location>
        <begin position="215"/>
        <end position="217"/>
    </location>
</feature>
<feature type="helix" evidence="8">
    <location>
        <begin position="221"/>
        <end position="231"/>
    </location>
</feature>
<feature type="strand" evidence="8">
    <location>
        <begin position="234"/>
        <end position="237"/>
    </location>
</feature>
<feature type="turn" evidence="8">
    <location>
        <begin position="243"/>
        <end position="245"/>
    </location>
</feature>
<feature type="helix" evidence="8">
    <location>
        <begin position="248"/>
        <end position="260"/>
    </location>
</feature>
<feature type="helix" evidence="8">
    <location>
        <begin position="264"/>
        <end position="266"/>
    </location>
</feature>
<feature type="strand" evidence="8">
    <location>
        <begin position="267"/>
        <end position="269"/>
    </location>
</feature>
<feature type="helix" evidence="8">
    <location>
        <begin position="276"/>
        <end position="278"/>
    </location>
</feature>
<feature type="helix" evidence="8">
    <location>
        <begin position="280"/>
        <end position="285"/>
    </location>
</feature>
<feature type="helix" evidence="8">
    <location>
        <begin position="294"/>
        <end position="298"/>
    </location>
</feature>
<feature type="helix" evidence="8">
    <location>
        <begin position="300"/>
        <end position="307"/>
    </location>
</feature>
<feature type="helix" evidence="8">
    <location>
        <begin position="311"/>
        <end position="318"/>
    </location>
</feature>
<feature type="helix" evidence="8">
    <location>
        <begin position="320"/>
        <end position="325"/>
    </location>
</feature>
<feature type="helix" evidence="8">
    <location>
        <begin position="336"/>
        <end position="338"/>
    </location>
</feature>
<feature type="helix" evidence="8">
    <location>
        <begin position="341"/>
        <end position="349"/>
    </location>
</feature>
<gene>
    <name evidence="4" type="ordered locus">MS53_0025</name>
</gene>
<sequence>MENKFARTVLGDIPVEKLGITDCHDHFIKNGGPEVEEHIDFLMLNVDASIKEFKEFIDRGGSTIVTMDPPNVGRDVLKTLEIANAVKNLGGNVIMSTGFHKAKFYDKYSSWLAVVPTEEIVKMCVAEIEEGMDEYNYNGPVVKRSKAKAGIIKAGTGYGAIDRLELKALEVAARTSILTGCPILVHTQLGTMALEVAKHLIGFGANPDKIQISHLNKNPDKYYYEKVIKETGVTLCFDGPDRVKYYPDSLLAENIKYLVDKGLQKHITLSLDAGRILYQRNYGLTKGKQTFGLAYLFDRFLPLLKQVGVSKEAIFDILVNNPKRVLAFDEKRNFDPLKVSKEVLELKKELNLN</sequence>
<reference key="1">
    <citation type="journal article" date="2005" name="J. Bacteriol.">
        <title>Swine and poultry pathogens: the complete genome sequences of two strains of Mycoplasma hyopneumoniae and a strain of Mycoplasma synoviae.</title>
        <authorList>
            <person name="Vasconcelos A.T.R."/>
            <person name="Ferreira H.B."/>
            <person name="Bizarro C.V."/>
            <person name="Bonatto S.L."/>
            <person name="Carvalho M.O."/>
            <person name="Pinto P.M."/>
            <person name="Almeida D.F."/>
            <person name="Almeida L.G.P."/>
            <person name="Almeida R."/>
            <person name="Alves-Junior L."/>
            <person name="Assuncao E.N."/>
            <person name="Azevedo V.A.C."/>
            <person name="Bogo M.R."/>
            <person name="Brigido M.M."/>
            <person name="Brocchi M."/>
            <person name="Burity H.A."/>
            <person name="Camargo A.A."/>
            <person name="Camargo S.S."/>
            <person name="Carepo M.S."/>
            <person name="Carraro D.M."/>
            <person name="de Mattos Cascardo J.C."/>
            <person name="Castro L.A."/>
            <person name="Cavalcanti G."/>
            <person name="Chemale G."/>
            <person name="Collevatti R.G."/>
            <person name="Cunha C.W."/>
            <person name="Dallagiovanna B."/>
            <person name="Dambros B.P."/>
            <person name="Dellagostin O.A."/>
            <person name="Falcao C."/>
            <person name="Fantinatti-Garboggini F."/>
            <person name="Felipe M.S.S."/>
            <person name="Fiorentin L."/>
            <person name="Franco G.R."/>
            <person name="Freitas N.S.A."/>
            <person name="Frias D."/>
            <person name="Grangeiro T.B."/>
            <person name="Grisard E.C."/>
            <person name="Guimaraes C.T."/>
            <person name="Hungria M."/>
            <person name="Jardim S.N."/>
            <person name="Krieger M.A."/>
            <person name="Laurino J.P."/>
            <person name="Lima L.F.A."/>
            <person name="Lopes M.I."/>
            <person name="Loreto E.L.S."/>
            <person name="Madeira H.M.F."/>
            <person name="Manfio G.P."/>
            <person name="Maranhao A.Q."/>
            <person name="Martinkovics C.T."/>
            <person name="Medeiros S.R.B."/>
            <person name="Moreira M.A.M."/>
            <person name="Neiva M."/>
            <person name="Ramalho-Neto C.E."/>
            <person name="Nicolas M.F."/>
            <person name="Oliveira S.C."/>
            <person name="Paixao R.F.C."/>
            <person name="Pedrosa F.O."/>
            <person name="Pena S.D.J."/>
            <person name="Pereira M."/>
            <person name="Pereira-Ferrari L."/>
            <person name="Piffer I."/>
            <person name="Pinto L.S."/>
            <person name="Potrich D.P."/>
            <person name="Salim A.C.M."/>
            <person name="Santos F.R."/>
            <person name="Schmitt R."/>
            <person name="Schneider M.P.C."/>
            <person name="Schrank A."/>
            <person name="Schrank I.S."/>
            <person name="Schuck A.F."/>
            <person name="Seuanez H.N."/>
            <person name="Silva D.W."/>
            <person name="Silva R."/>
            <person name="Silva S.C."/>
            <person name="Soares C.M.A."/>
            <person name="Souza K.R.L."/>
            <person name="Souza R.C."/>
            <person name="Staats C.C."/>
            <person name="Steffens M.B.R."/>
            <person name="Teixeira S.M.R."/>
            <person name="Urmenyi T.P."/>
            <person name="Vainstein M.H."/>
            <person name="Zuccherato L.W."/>
            <person name="Simpson A.J.G."/>
            <person name="Zaha A."/>
        </authorList>
    </citation>
    <scope>NUCLEOTIDE SEQUENCE [LARGE SCALE GENOMIC DNA]</scope>
    <source>
        <strain evidence="4 5">53</strain>
    </source>
</reference>
<reference evidence="6 7" key="2">
    <citation type="journal article" date="2014" name="Biochemistry">
        <title>Functional annotation and structural characterization of a novel lactonase hydrolyzing D-xylono-1,4-lactone-5-phosphate and L-arabino-1,4-lactone-5-phosphate.</title>
        <authorList>
            <person name="Korczynska M."/>
            <person name="Xiang D.F."/>
            <person name="Zhang Z."/>
            <person name="Xu C."/>
            <person name="Narindoshvili T."/>
            <person name="Kamat S.S."/>
            <person name="Williams H.J."/>
            <person name="Chang S.S."/>
            <person name="Kolb P."/>
            <person name="Hillerich B."/>
            <person name="Sauder J.M."/>
            <person name="Burley S.K."/>
            <person name="Almo S.C."/>
            <person name="Swaminathan S."/>
            <person name="Shoichet B.K."/>
            <person name="Raushel F.M."/>
        </authorList>
    </citation>
    <scope>X-RAY CRYSTALLOGRAPHY (2.06 ANGSTROMS) OF 2-353 IN COMPLEX WITH 2 ZINC IONS AND SUBSTRATE ANALOG</scope>
    <scope>FUNCTION</scope>
    <scope>CATALYTIC ACTIVITY</scope>
    <scope>BIOPHYSICOCHEMICAL PROPERTIES</scope>
    <scope>COFACTOR</scope>
    <scope>CARBOXYLATION AT LYS-153</scope>
    <scope>MUTAGENESIS OF LYS-29; GLU-34 AND HIS-100</scope>
    <scope>SUBSTRATE SPECIFICITY</scope>
</reference>
<dbReference type="EC" id="3.1.1.104" evidence="2"/>
<dbReference type="EC" id="3.1.1.25" evidence="2"/>
<dbReference type="EMBL" id="AE017245">
    <property type="protein sequence ID" value="AAZ43447.1"/>
    <property type="molecule type" value="Genomic_DNA"/>
</dbReference>
<dbReference type="RefSeq" id="WP_011283191.1">
    <property type="nucleotide sequence ID" value="NC_007294.1"/>
</dbReference>
<dbReference type="PDB" id="3MSR">
    <property type="method" value="X-ray"/>
    <property type="resolution" value="2.16 A"/>
    <property type="chains" value="A=2-353"/>
</dbReference>
<dbReference type="PDB" id="3OVG">
    <property type="method" value="X-ray"/>
    <property type="resolution" value="2.06 A"/>
    <property type="chains" value="A/B/C/D/E/F=2-353"/>
</dbReference>
<dbReference type="PDBsum" id="3MSR"/>
<dbReference type="PDBsum" id="3OVG"/>
<dbReference type="SMR" id="Q4A724"/>
<dbReference type="STRING" id="262723.MS53_0025"/>
<dbReference type="KEGG" id="msy:MS53_0025"/>
<dbReference type="eggNOG" id="COG1735">
    <property type="taxonomic scope" value="Bacteria"/>
</dbReference>
<dbReference type="HOGENOM" id="CLU_054760_1_1_14"/>
<dbReference type="OrthoDB" id="105927at2"/>
<dbReference type="BRENDA" id="3.1.1.104">
    <property type="organism ID" value="10311"/>
</dbReference>
<dbReference type="EvolutionaryTrace" id="Q4A724"/>
<dbReference type="Proteomes" id="UP000000549">
    <property type="component" value="Chromosome"/>
</dbReference>
<dbReference type="GO" id="GO:0050490">
    <property type="term" value="F:1,4-lactonase activity"/>
    <property type="evidence" value="ECO:0000314"/>
    <property type="project" value="CACAO"/>
</dbReference>
<dbReference type="GO" id="GO:0008270">
    <property type="term" value="F:zinc ion binding"/>
    <property type="evidence" value="ECO:0007669"/>
    <property type="project" value="InterPro"/>
</dbReference>
<dbReference type="GO" id="GO:0009056">
    <property type="term" value="P:catabolic process"/>
    <property type="evidence" value="ECO:0007669"/>
    <property type="project" value="InterPro"/>
</dbReference>
<dbReference type="FunFam" id="3.20.20.140:FF:000222">
    <property type="entry name" value="Phospho-furanose lactonase"/>
    <property type="match status" value="1"/>
</dbReference>
<dbReference type="Gene3D" id="3.20.20.140">
    <property type="entry name" value="Metal-dependent hydrolases"/>
    <property type="match status" value="1"/>
</dbReference>
<dbReference type="InterPro" id="IPR032466">
    <property type="entry name" value="Metal_Hydrolase"/>
</dbReference>
<dbReference type="InterPro" id="IPR054957">
    <property type="entry name" value="PhFuoseLconase"/>
</dbReference>
<dbReference type="InterPro" id="IPR001559">
    <property type="entry name" value="Phosphotriesterase"/>
</dbReference>
<dbReference type="NCBIfam" id="NF045706">
    <property type="entry name" value="PhFuoseLconase"/>
    <property type="match status" value="1"/>
</dbReference>
<dbReference type="PANTHER" id="PTHR10819">
    <property type="entry name" value="PHOSPHOTRIESTERASE-RELATED"/>
    <property type="match status" value="1"/>
</dbReference>
<dbReference type="PANTHER" id="PTHR10819:SF3">
    <property type="entry name" value="PHOSPHOTRIESTERASE-RELATED PROTEIN"/>
    <property type="match status" value="1"/>
</dbReference>
<dbReference type="Pfam" id="PF02126">
    <property type="entry name" value="PTE"/>
    <property type="match status" value="1"/>
</dbReference>
<dbReference type="PIRSF" id="PIRSF016839">
    <property type="entry name" value="PhP"/>
    <property type="match status" value="1"/>
</dbReference>
<dbReference type="SUPFAM" id="SSF51556">
    <property type="entry name" value="Metallo-dependent hydrolases"/>
    <property type="match status" value="1"/>
</dbReference>
<dbReference type="PROSITE" id="PS51347">
    <property type="entry name" value="PHOSPHOTRIESTERASE_2"/>
    <property type="match status" value="1"/>
</dbReference>
<evidence type="ECO:0000255" key="1">
    <source>
        <dbReference type="PROSITE-ProRule" id="PRU00679"/>
    </source>
</evidence>
<evidence type="ECO:0000269" key="2">
    <source>
    </source>
</evidence>
<evidence type="ECO:0000303" key="3">
    <source>
    </source>
</evidence>
<evidence type="ECO:0000312" key="4">
    <source>
        <dbReference type="EMBL" id="AAZ43447.1"/>
    </source>
</evidence>
<evidence type="ECO:0000312" key="5">
    <source>
        <dbReference type="Proteomes" id="UP000000549"/>
    </source>
</evidence>
<evidence type="ECO:0007744" key="6">
    <source>
        <dbReference type="PDB" id="3MSR"/>
    </source>
</evidence>
<evidence type="ECO:0007744" key="7">
    <source>
        <dbReference type="PDB" id="3OVG"/>
    </source>
</evidence>
<evidence type="ECO:0007829" key="8">
    <source>
        <dbReference type="PDB" id="3OVG"/>
    </source>
</evidence>
<organism>
    <name type="scientific">Mycoplasmopsis synoviae (strain 53)</name>
    <name type="common">Mycoplasma synoviae</name>
    <dbReference type="NCBI Taxonomy" id="262723"/>
    <lineage>
        <taxon>Bacteria</taxon>
        <taxon>Bacillati</taxon>
        <taxon>Mycoplasmatota</taxon>
        <taxon>Mycoplasmoidales</taxon>
        <taxon>Metamycoplasmataceae</taxon>
        <taxon>Mycoplasmopsis</taxon>
    </lineage>
</organism>